<name>EXP11_ARATH</name>
<proteinExistence type="evidence at transcript level"/>
<sequence length="252" mass="26761">MSKSLAGLAVLAALFIAVDAFRPSGLTNGHATFYGGSDASGTMGGACGYGDLYSAGYGTMTAALSTALFNDGASCGECYRITCDHAADSRWCLKGASVVITATNFCPPNFALPNNNGGWCNPPLKHFDMAQPAWEKIGIYRGGIVPVVFQRVSCYKKGGVRFRINGRDYFELVNIQNVGGAGSIKSVSIKGSKTGWLAMSRNWGANWQSNAYLDGQALSFSITTTDGATRVFLNVVPSSWSFGQIYSSNVQF</sequence>
<comment type="function">
    <text evidence="1">Causes loosening and extension of plant cell walls by disrupting non-covalent bonding between cellulose microfibrils and matrix glucans. No enzymatic activity has been found (By similarity).</text>
</comment>
<comment type="subcellular location">
    <subcellularLocation>
        <location>Secreted</location>
        <location>Cell wall</location>
    </subcellularLocation>
    <subcellularLocation>
        <location>Membrane</location>
        <topology>Peripheral membrane protein</topology>
    </subcellularLocation>
</comment>
<comment type="tissue specificity">
    <text evidence="5">Expressed in the leaf, but not in the epidermis or in the vascular bundles.</text>
</comment>
<comment type="similarity">
    <text evidence="6">Belongs to the expansin family. Expansin A subfamily.</text>
</comment>
<comment type="online information" name="EXPANSIN homepage">
    <link uri="https://www.dept.psu.edu/biology/groups/expansins/index.htm"/>
</comment>
<protein>
    <recommendedName>
        <fullName>Expansin-A11</fullName>
        <shortName>AtEXPA11</shortName>
    </recommendedName>
    <alternativeName>
        <fullName>Alpha-expansin-11</fullName>
        <shortName>At-EXP11</shortName>
        <shortName>AtEx11</shortName>
    </alternativeName>
    <alternativeName>
        <fullName>Ath-ExpAlpha-1.14</fullName>
    </alternativeName>
</protein>
<accession>Q9LNU3</accession>
<reference key="1">
    <citation type="journal article" date="2000" name="Nature">
        <title>Sequence and analysis of chromosome 1 of the plant Arabidopsis thaliana.</title>
        <authorList>
            <person name="Theologis A."/>
            <person name="Ecker J.R."/>
            <person name="Palm C.J."/>
            <person name="Federspiel N.A."/>
            <person name="Kaul S."/>
            <person name="White O."/>
            <person name="Alonso J."/>
            <person name="Altafi H."/>
            <person name="Araujo R."/>
            <person name="Bowman C.L."/>
            <person name="Brooks S.Y."/>
            <person name="Buehler E."/>
            <person name="Chan A."/>
            <person name="Chao Q."/>
            <person name="Chen H."/>
            <person name="Cheuk R.F."/>
            <person name="Chin C.W."/>
            <person name="Chung M.K."/>
            <person name="Conn L."/>
            <person name="Conway A.B."/>
            <person name="Conway A.R."/>
            <person name="Creasy T.H."/>
            <person name="Dewar K."/>
            <person name="Dunn P."/>
            <person name="Etgu P."/>
            <person name="Feldblyum T.V."/>
            <person name="Feng J.-D."/>
            <person name="Fong B."/>
            <person name="Fujii C.Y."/>
            <person name="Gill J.E."/>
            <person name="Goldsmith A.D."/>
            <person name="Haas B."/>
            <person name="Hansen N.F."/>
            <person name="Hughes B."/>
            <person name="Huizar L."/>
            <person name="Hunter J.L."/>
            <person name="Jenkins J."/>
            <person name="Johnson-Hopson C."/>
            <person name="Khan S."/>
            <person name="Khaykin E."/>
            <person name="Kim C.J."/>
            <person name="Koo H.L."/>
            <person name="Kremenetskaia I."/>
            <person name="Kurtz D.B."/>
            <person name="Kwan A."/>
            <person name="Lam B."/>
            <person name="Langin-Hooper S."/>
            <person name="Lee A."/>
            <person name="Lee J.M."/>
            <person name="Lenz C.A."/>
            <person name="Li J.H."/>
            <person name="Li Y.-P."/>
            <person name="Lin X."/>
            <person name="Liu S.X."/>
            <person name="Liu Z.A."/>
            <person name="Luros J.S."/>
            <person name="Maiti R."/>
            <person name="Marziali A."/>
            <person name="Militscher J."/>
            <person name="Miranda M."/>
            <person name="Nguyen M."/>
            <person name="Nierman W.C."/>
            <person name="Osborne B.I."/>
            <person name="Pai G."/>
            <person name="Peterson J."/>
            <person name="Pham P.K."/>
            <person name="Rizzo M."/>
            <person name="Rooney T."/>
            <person name="Rowley D."/>
            <person name="Sakano H."/>
            <person name="Salzberg S.L."/>
            <person name="Schwartz J.R."/>
            <person name="Shinn P."/>
            <person name="Southwick A.M."/>
            <person name="Sun H."/>
            <person name="Tallon L.J."/>
            <person name="Tambunga G."/>
            <person name="Toriumi M.J."/>
            <person name="Town C.D."/>
            <person name="Utterback T."/>
            <person name="Van Aken S."/>
            <person name="Vaysberg M."/>
            <person name="Vysotskaia V.S."/>
            <person name="Walker M."/>
            <person name="Wu D."/>
            <person name="Yu G."/>
            <person name="Fraser C.M."/>
            <person name="Venter J.C."/>
            <person name="Davis R.W."/>
        </authorList>
    </citation>
    <scope>NUCLEOTIDE SEQUENCE [LARGE SCALE GENOMIC DNA]</scope>
    <source>
        <strain>cv. Columbia</strain>
    </source>
</reference>
<reference key="2">
    <citation type="journal article" date="2017" name="Plant J.">
        <title>Araport11: a complete reannotation of the Arabidopsis thaliana reference genome.</title>
        <authorList>
            <person name="Cheng C.Y."/>
            <person name="Krishnakumar V."/>
            <person name="Chan A.P."/>
            <person name="Thibaud-Nissen F."/>
            <person name="Schobel S."/>
            <person name="Town C.D."/>
        </authorList>
    </citation>
    <scope>GENOME REANNOTATION</scope>
    <source>
        <strain>cv. Columbia</strain>
    </source>
</reference>
<reference key="3">
    <citation type="journal article" date="2003" name="Science">
        <title>Empirical analysis of transcriptional activity in the Arabidopsis genome.</title>
        <authorList>
            <person name="Yamada K."/>
            <person name="Lim J."/>
            <person name="Dale J.M."/>
            <person name="Chen H."/>
            <person name="Shinn P."/>
            <person name="Palm C.J."/>
            <person name="Southwick A.M."/>
            <person name="Wu H.C."/>
            <person name="Kim C.J."/>
            <person name="Nguyen M."/>
            <person name="Pham P.K."/>
            <person name="Cheuk R.F."/>
            <person name="Karlin-Newmann G."/>
            <person name="Liu S.X."/>
            <person name="Lam B."/>
            <person name="Sakano H."/>
            <person name="Wu T."/>
            <person name="Yu G."/>
            <person name="Miranda M."/>
            <person name="Quach H.L."/>
            <person name="Tripp M."/>
            <person name="Chang C.H."/>
            <person name="Lee J.M."/>
            <person name="Toriumi M.J."/>
            <person name="Chan M.M."/>
            <person name="Tang C.C."/>
            <person name="Onodera C.S."/>
            <person name="Deng J.M."/>
            <person name="Akiyama K."/>
            <person name="Ansari Y."/>
            <person name="Arakawa T."/>
            <person name="Banh J."/>
            <person name="Banno F."/>
            <person name="Bowser L."/>
            <person name="Brooks S.Y."/>
            <person name="Carninci P."/>
            <person name="Chao Q."/>
            <person name="Choy N."/>
            <person name="Enju A."/>
            <person name="Goldsmith A.D."/>
            <person name="Gurjal M."/>
            <person name="Hansen N.F."/>
            <person name="Hayashizaki Y."/>
            <person name="Johnson-Hopson C."/>
            <person name="Hsuan V.W."/>
            <person name="Iida K."/>
            <person name="Karnes M."/>
            <person name="Khan S."/>
            <person name="Koesema E."/>
            <person name="Ishida J."/>
            <person name="Jiang P.X."/>
            <person name="Jones T."/>
            <person name="Kawai J."/>
            <person name="Kamiya A."/>
            <person name="Meyers C."/>
            <person name="Nakajima M."/>
            <person name="Narusaka M."/>
            <person name="Seki M."/>
            <person name="Sakurai T."/>
            <person name="Satou M."/>
            <person name="Tamse R."/>
            <person name="Vaysberg M."/>
            <person name="Wallender E.K."/>
            <person name="Wong C."/>
            <person name="Yamamura Y."/>
            <person name="Yuan S."/>
            <person name="Shinozaki K."/>
            <person name="Davis R.W."/>
            <person name="Theologis A."/>
            <person name="Ecker J.R."/>
        </authorList>
    </citation>
    <scope>NUCLEOTIDE SEQUENCE [LARGE SCALE MRNA]</scope>
    <source>
        <strain>cv. Columbia</strain>
    </source>
</reference>
<reference key="4">
    <citation type="book" date="1999" name="Proceedings of Plant Biology '99: The annual meeting of the American Society of Plant Physiologists">
        <title>Expression patterns for selective expansin genes in Arabidopsis.</title>
        <authorList>
            <person name="Durachko D.M."/>
            <person name="Cosgrove D.J."/>
        </authorList>
    </citation>
    <scope>TISSUE SPECIFICITY</scope>
</reference>
<reference key="5">
    <citation type="journal article" date="2004" name="Plant Mol. Biol.">
        <title>Nomenclature for members of the expansin superfamily of genes and proteins.</title>
        <authorList>
            <person name="Kende H."/>
            <person name="Bradford K.J."/>
            <person name="Brummell D.A."/>
            <person name="Cho H.-T."/>
            <person name="Cosgrove D.J."/>
            <person name="Fleming A.J."/>
            <person name="Gehring C."/>
            <person name="Lee Y."/>
            <person name="McQueen-Mason S.J."/>
            <person name="Rose J.K.C."/>
            <person name="Voesenek L.A.C."/>
        </authorList>
    </citation>
    <scope>NOMENCLATURE</scope>
</reference>
<evidence type="ECO:0000250" key="1"/>
<evidence type="ECO:0000255" key="2"/>
<evidence type="ECO:0000255" key="3">
    <source>
        <dbReference type="PROSITE-ProRule" id="PRU00078"/>
    </source>
</evidence>
<evidence type="ECO:0000255" key="4">
    <source>
        <dbReference type="PROSITE-ProRule" id="PRU00079"/>
    </source>
</evidence>
<evidence type="ECO:0000269" key="5">
    <source ref="4"/>
</evidence>
<evidence type="ECO:0000305" key="6"/>
<keyword id="KW-0134">Cell wall</keyword>
<keyword id="KW-0961">Cell wall biogenesis/degradation</keyword>
<keyword id="KW-0472">Membrane</keyword>
<keyword id="KW-1185">Reference proteome</keyword>
<keyword id="KW-0964">Secreted</keyword>
<keyword id="KW-0732">Signal</keyword>
<gene>
    <name type="primary">EXPA11</name>
    <name type="synonym">EXP11</name>
    <name type="ordered locus">At1g20190</name>
    <name type="ORF">T20H2.4</name>
    <name type="ORF">T20H2_5</name>
</gene>
<feature type="signal peptide" evidence="2">
    <location>
        <begin position="1"/>
        <end position="20"/>
    </location>
</feature>
<feature type="chain" id="PRO_0000008692" description="Expansin-A11">
    <location>
        <begin position="21"/>
        <end position="252"/>
    </location>
</feature>
<feature type="domain" description="Expansin-like EG45" evidence="4">
    <location>
        <begin position="44"/>
        <end position="159"/>
    </location>
</feature>
<feature type="domain" description="Expansin-like CBD" evidence="3">
    <location>
        <begin position="169"/>
        <end position="248"/>
    </location>
</feature>
<organism>
    <name type="scientific">Arabidopsis thaliana</name>
    <name type="common">Mouse-ear cress</name>
    <dbReference type="NCBI Taxonomy" id="3702"/>
    <lineage>
        <taxon>Eukaryota</taxon>
        <taxon>Viridiplantae</taxon>
        <taxon>Streptophyta</taxon>
        <taxon>Embryophyta</taxon>
        <taxon>Tracheophyta</taxon>
        <taxon>Spermatophyta</taxon>
        <taxon>Magnoliopsida</taxon>
        <taxon>eudicotyledons</taxon>
        <taxon>Gunneridae</taxon>
        <taxon>Pentapetalae</taxon>
        <taxon>rosids</taxon>
        <taxon>malvids</taxon>
        <taxon>Brassicales</taxon>
        <taxon>Brassicaceae</taxon>
        <taxon>Camelineae</taxon>
        <taxon>Arabidopsis</taxon>
    </lineage>
</organism>
<dbReference type="EMBL" id="AC022472">
    <property type="protein sequence ID" value="AAF79895.1"/>
    <property type="molecule type" value="Genomic_DNA"/>
</dbReference>
<dbReference type="EMBL" id="CP002684">
    <property type="protein sequence ID" value="AEE29949.1"/>
    <property type="molecule type" value="Genomic_DNA"/>
</dbReference>
<dbReference type="EMBL" id="AF332436">
    <property type="protein sequence ID" value="AAG48799.1"/>
    <property type="molecule type" value="mRNA"/>
</dbReference>
<dbReference type="PIR" id="F86335">
    <property type="entry name" value="F86335"/>
</dbReference>
<dbReference type="RefSeq" id="NP_173446.1">
    <property type="nucleotide sequence ID" value="NM_101872.4"/>
</dbReference>
<dbReference type="SMR" id="Q9LNU3"/>
<dbReference type="FunCoup" id="Q9LNU3">
    <property type="interactions" value="6"/>
</dbReference>
<dbReference type="STRING" id="3702.Q9LNU3"/>
<dbReference type="PaxDb" id="3702-AT1G20190.1"/>
<dbReference type="ProteomicsDB" id="222270"/>
<dbReference type="EnsemblPlants" id="AT1G20190.1">
    <property type="protein sequence ID" value="AT1G20190.1"/>
    <property type="gene ID" value="AT1G20190"/>
</dbReference>
<dbReference type="GeneID" id="838608"/>
<dbReference type="Gramene" id="AT1G20190.1">
    <property type="protein sequence ID" value="AT1G20190.1"/>
    <property type="gene ID" value="AT1G20190"/>
</dbReference>
<dbReference type="KEGG" id="ath:AT1G20190"/>
<dbReference type="Araport" id="AT1G20190"/>
<dbReference type="TAIR" id="AT1G20190">
    <property type="gene designation" value="EXPA11"/>
</dbReference>
<dbReference type="eggNOG" id="ENOG502QVVV">
    <property type="taxonomic scope" value="Eukaryota"/>
</dbReference>
<dbReference type="HOGENOM" id="CLU_027462_0_1_1"/>
<dbReference type="InParanoid" id="Q9LNU3"/>
<dbReference type="OMA" id="RTSWMAM"/>
<dbReference type="OrthoDB" id="5823761at2759"/>
<dbReference type="PhylomeDB" id="Q9LNU3"/>
<dbReference type="PRO" id="PR:Q9LNU3"/>
<dbReference type="Proteomes" id="UP000006548">
    <property type="component" value="Chromosome 1"/>
</dbReference>
<dbReference type="ExpressionAtlas" id="Q9LNU3">
    <property type="expression patterns" value="baseline and differential"/>
</dbReference>
<dbReference type="GO" id="GO:0005576">
    <property type="term" value="C:extracellular region"/>
    <property type="evidence" value="ECO:0007669"/>
    <property type="project" value="UniProtKB-KW"/>
</dbReference>
<dbReference type="GO" id="GO:0016020">
    <property type="term" value="C:membrane"/>
    <property type="evidence" value="ECO:0007669"/>
    <property type="project" value="UniProtKB-SubCell"/>
</dbReference>
<dbReference type="GO" id="GO:0009653">
    <property type="term" value="P:anatomical structure morphogenesis"/>
    <property type="evidence" value="ECO:0007669"/>
    <property type="project" value="UniProtKB-ARBA"/>
</dbReference>
<dbReference type="GO" id="GO:0009828">
    <property type="term" value="P:plant-type cell wall loosening"/>
    <property type="evidence" value="ECO:0000250"/>
    <property type="project" value="UniProtKB"/>
</dbReference>
<dbReference type="CDD" id="cd22274">
    <property type="entry name" value="DPBB_EXPA_N"/>
    <property type="match status" value="1"/>
</dbReference>
<dbReference type="FunFam" id="2.40.40.10:FF:000001">
    <property type="entry name" value="Expansin"/>
    <property type="match status" value="1"/>
</dbReference>
<dbReference type="FunFam" id="2.60.40.760:FF:000001">
    <property type="entry name" value="Expansin"/>
    <property type="match status" value="1"/>
</dbReference>
<dbReference type="Gene3D" id="2.60.40.760">
    <property type="entry name" value="Expansin, cellulose-binding-like domain"/>
    <property type="match status" value="1"/>
</dbReference>
<dbReference type="Gene3D" id="2.40.40.10">
    <property type="entry name" value="RlpA-like domain"/>
    <property type="match status" value="1"/>
</dbReference>
<dbReference type="InterPro" id="IPR007118">
    <property type="entry name" value="Expan_Lol_pI"/>
</dbReference>
<dbReference type="InterPro" id="IPR002963">
    <property type="entry name" value="Expansin"/>
</dbReference>
<dbReference type="InterPro" id="IPR007112">
    <property type="entry name" value="Expansin/allergen_DPBB_dom"/>
</dbReference>
<dbReference type="InterPro" id="IPR007117">
    <property type="entry name" value="Expansin_CBD"/>
</dbReference>
<dbReference type="InterPro" id="IPR036749">
    <property type="entry name" value="Expansin_CBD_sf"/>
</dbReference>
<dbReference type="InterPro" id="IPR009009">
    <property type="entry name" value="RlpA-like_DPBB"/>
</dbReference>
<dbReference type="InterPro" id="IPR036908">
    <property type="entry name" value="RlpA-like_sf"/>
</dbReference>
<dbReference type="PANTHER" id="PTHR31867">
    <property type="entry name" value="EXPANSIN-A15"/>
    <property type="match status" value="1"/>
</dbReference>
<dbReference type="Pfam" id="PF03330">
    <property type="entry name" value="DPBB_1"/>
    <property type="match status" value="1"/>
</dbReference>
<dbReference type="Pfam" id="PF01357">
    <property type="entry name" value="Expansin_C"/>
    <property type="match status" value="1"/>
</dbReference>
<dbReference type="PRINTS" id="PR01226">
    <property type="entry name" value="EXPANSIN"/>
</dbReference>
<dbReference type="PRINTS" id="PR01225">
    <property type="entry name" value="EXPANSNFAMLY"/>
</dbReference>
<dbReference type="SMART" id="SM00837">
    <property type="entry name" value="DPBB_1"/>
    <property type="match status" value="1"/>
</dbReference>
<dbReference type="SUPFAM" id="SSF50685">
    <property type="entry name" value="Barwin-like endoglucanases"/>
    <property type="match status" value="1"/>
</dbReference>
<dbReference type="SUPFAM" id="SSF49590">
    <property type="entry name" value="PHL pollen allergen"/>
    <property type="match status" value="1"/>
</dbReference>
<dbReference type="PROSITE" id="PS50843">
    <property type="entry name" value="EXPANSIN_CBD"/>
    <property type="match status" value="1"/>
</dbReference>
<dbReference type="PROSITE" id="PS50842">
    <property type="entry name" value="EXPANSIN_EG45"/>
    <property type="match status" value="1"/>
</dbReference>